<accession>Q8TGT2</accession>
<accession>D6VXJ0</accession>
<feature type="chain" id="PRO_0000245420" description="Uncharacterized protein YKL096C-B">
    <location>
        <begin position="1"/>
        <end position="49"/>
    </location>
</feature>
<feature type="transmembrane region" description="Helical" evidence="1">
    <location>
        <begin position="31"/>
        <end position="48"/>
    </location>
</feature>
<evidence type="ECO:0000255" key="1"/>
<evidence type="ECO:0000305" key="2"/>
<dbReference type="EMBL" id="Z28096">
    <property type="status" value="NOT_ANNOTATED_CDS"/>
    <property type="molecule type" value="Genomic_DNA"/>
</dbReference>
<dbReference type="EMBL" id="AF479903">
    <property type="protein sequence ID" value="AAL79216.1"/>
    <property type="molecule type" value="Genomic_DNA"/>
</dbReference>
<dbReference type="EMBL" id="BK006944">
    <property type="protein sequence ID" value="DAA09060.1"/>
    <property type="molecule type" value="Genomic_DNA"/>
</dbReference>
<dbReference type="RefSeq" id="NP_878110.1">
    <property type="nucleotide sequence ID" value="NM_001184604.1"/>
</dbReference>
<dbReference type="BioGRID" id="37082">
    <property type="interactions" value="50"/>
</dbReference>
<dbReference type="FunCoup" id="Q8TGT2">
    <property type="interactions" value="23"/>
</dbReference>
<dbReference type="STRING" id="4932.YKL096C-B"/>
<dbReference type="PaxDb" id="4932-YKL096C-B"/>
<dbReference type="EnsemblFungi" id="YKL096C-B_mRNA">
    <property type="protein sequence ID" value="YKL096C-B"/>
    <property type="gene ID" value="YKL096C-B"/>
</dbReference>
<dbReference type="GeneID" id="1500486"/>
<dbReference type="KEGG" id="sce:YKL096C-B"/>
<dbReference type="AGR" id="SGD:S000028667"/>
<dbReference type="SGD" id="S000028667">
    <property type="gene designation" value="YKL096C-B"/>
</dbReference>
<dbReference type="VEuPathDB" id="FungiDB:YKL096C-B"/>
<dbReference type="HOGENOM" id="CLU_3144069_0_0_1"/>
<dbReference type="InParanoid" id="Q8TGT2"/>
<dbReference type="OrthoDB" id="4054567at2759"/>
<dbReference type="BioCyc" id="YEAST:G3O-32100-MONOMER"/>
<dbReference type="ChiTaRS" id="YKL096C-B">
    <property type="organism name" value="yeast"/>
</dbReference>
<dbReference type="PRO" id="PR:Q8TGT2"/>
<dbReference type="Proteomes" id="UP000002311">
    <property type="component" value="Chromosome XI"/>
</dbReference>
<dbReference type="GO" id="GO:0016020">
    <property type="term" value="C:membrane"/>
    <property type="evidence" value="ECO:0007669"/>
    <property type="project" value="UniProtKB-SubCell"/>
</dbReference>
<gene>
    <name type="ordered locus">YKL096C-B</name>
</gene>
<sequence>MKLFILDYEKKRTKIGKGMARRELKMMNKKPDLYTIIVSYFSIFSLFFF</sequence>
<keyword id="KW-0472">Membrane</keyword>
<keyword id="KW-1185">Reference proteome</keyword>
<keyword id="KW-0812">Transmembrane</keyword>
<keyword id="KW-1133">Transmembrane helix</keyword>
<organism>
    <name type="scientific">Saccharomyces cerevisiae (strain ATCC 204508 / S288c)</name>
    <name type="common">Baker's yeast</name>
    <dbReference type="NCBI Taxonomy" id="559292"/>
    <lineage>
        <taxon>Eukaryota</taxon>
        <taxon>Fungi</taxon>
        <taxon>Dikarya</taxon>
        <taxon>Ascomycota</taxon>
        <taxon>Saccharomycotina</taxon>
        <taxon>Saccharomycetes</taxon>
        <taxon>Saccharomycetales</taxon>
        <taxon>Saccharomycetaceae</taxon>
        <taxon>Saccharomyces</taxon>
    </lineage>
</organism>
<name>YK096_YEAST</name>
<protein>
    <recommendedName>
        <fullName>Uncharacterized protein YKL096C-B</fullName>
    </recommendedName>
</protein>
<proteinExistence type="predicted"/>
<comment type="subcellular location">
    <subcellularLocation>
        <location evidence="2">Membrane</location>
        <topology evidence="2">Single-pass membrane protein</topology>
    </subcellularLocation>
</comment>
<reference key="1">
    <citation type="journal article" date="1994" name="Nature">
        <title>Complete DNA sequence of yeast chromosome XI.</title>
        <authorList>
            <person name="Dujon B."/>
            <person name="Alexandraki D."/>
            <person name="Andre B."/>
            <person name="Ansorge W."/>
            <person name="Baladron V."/>
            <person name="Ballesta J.P.G."/>
            <person name="Banrevi A."/>
            <person name="Bolle P.-A."/>
            <person name="Bolotin-Fukuhara M."/>
            <person name="Bossier P."/>
            <person name="Bou G."/>
            <person name="Boyer J."/>
            <person name="Buitrago M.J."/>
            <person name="Cheret G."/>
            <person name="Colleaux L."/>
            <person name="Daignan-Fornier B."/>
            <person name="del Rey F."/>
            <person name="Dion C."/>
            <person name="Domdey H."/>
            <person name="Duesterhoeft A."/>
            <person name="Duesterhus S."/>
            <person name="Entian K.-D."/>
            <person name="Erfle H."/>
            <person name="Esteban P.F."/>
            <person name="Feldmann H."/>
            <person name="Fernandes L."/>
            <person name="Fobo G.M."/>
            <person name="Fritz C."/>
            <person name="Fukuhara H."/>
            <person name="Gabel C."/>
            <person name="Gaillon L."/>
            <person name="Garcia-Cantalejo J.M."/>
            <person name="Garcia-Ramirez J.J."/>
            <person name="Gent M.E."/>
            <person name="Ghazvini M."/>
            <person name="Goffeau A."/>
            <person name="Gonzalez A."/>
            <person name="Grothues D."/>
            <person name="Guerreiro P."/>
            <person name="Hegemann J.H."/>
            <person name="Hewitt N."/>
            <person name="Hilger F."/>
            <person name="Hollenberg C.P."/>
            <person name="Horaitis O."/>
            <person name="Indge K.J."/>
            <person name="Jacquier A."/>
            <person name="James C.M."/>
            <person name="Jauniaux J.-C."/>
            <person name="Jimenez A."/>
            <person name="Keuchel H."/>
            <person name="Kirchrath L."/>
            <person name="Kleine K."/>
            <person name="Koetter P."/>
            <person name="Legrain P."/>
            <person name="Liebl S."/>
            <person name="Louis E.J."/>
            <person name="Maia e Silva A."/>
            <person name="Marck C."/>
            <person name="Monnier A.-L."/>
            <person name="Moestl D."/>
            <person name="Mueller S."/>
            <person name="Obermaier B."/>
            <person name="Oliver S.G."/>
            <person name="Pallier C."/>
            <person name="Pascolo S."/>
            <person name="Pfeiffer F."/>
            <person name="Philippsen P."/>
            <person name="Planta R.J."/>
            <person name="Pohl F.M."/>
            <person name="Pohl T.M."/>
            <person name="Poehlmann R."/>
            <person name="Portetelle D."/>
            <person name="Purnelle B."/>
            <person name="Puzos V."/>
            <person name="Ramezani Rad M."/>
            <person name="Rasmussen S.W."/>
            <person name="Remacha M.A."/>
            <person name="Revuelta J.L."/>
            <person name="Richard G.-F."/>
            <person name="Rieger M."/>
            <person name="Rodrigues-Pousada C."/>
            <person name="Rose M."/>
            <person name="Rupp T."/>
            <person name="Santos M.A."/>
            <person name="Schwager C."/>
            <person name="Sensen C."/>
            <person name="Skala J."/>
            <person name="Soares H."/>
            <person name="Sor F."/>
            <person name="Stegemann J."/>
            <person name="Tettelin H."/>
            <person name="Thierry A."/>
            <person name="Tzermia M."/>
            <person name="Urrestarazu L.A."/>
            <person name="van Dyck L."/>
            <person name="van Vliet-Reedijk J.C."/>
            <person name="Valens M."/>
            <person name="Vandenbol M."/>
            <person name="Vilela C."/>
            <person name="Vissers S."/>
            <person name="von Wettstein D."/>
            <person name="Voss H."/>
            <person name="Wiemann S."/>
            <person name="Xu G."/>
            <person name="Zimmermann J."/>
            <person name="Haasemann M."/>
            <person name="Becker I."/>
            <person name="Mewes H.-W."/>
        </authorList>
    </citation>
    <scope>NUCLEOTIDE SEQUENCE [LARGE SCALE GENOMIC DNA]</scope>
    <source>
        <strain>ATCC 204508 / S288c</strain>
    </source>
</reference>
<reference key="2">
    <citation type="journal article" date="2014" name="G3 (Bethesda)">
        <title>The reference genome sequence of Saccharomyces cerevisiae: Then and now.</title>
        <authorList>
            <person name="Engel S.R."/>
            <person name="Dietrich F.S."/>
            <person name="Fisk D.G."/>
            <person name="Binkley G."/>
            <person name="Balakrishnan R."/>
            <person name="Costanzo M.C."/>
            <person name="Dwight S.S."/>
            <person name="Hitz B.C."/>
            <person name="Karra K."/>
            <person name="Nash R.S."/>
            <person name="Weng S."/>
            <person name="Wong E.D."/>
            <person name="Lloyd P."/>
            <person name="Skrzypek M.S."/>
            <person name="Miyasato S.R."/>
            <person name="Simison M."/>
            <person name="Cherry J.M."/>
        </authorList>
    </citation>
    <scope>GENOME REANNOTATION</scope>
    <source>
        <strain>ATCC 204508 / S288c</strain>
    </source>
</reference>
<reference key="3">
    <citation type="journal article" date="2002" name="Nat. Biotechnol.">
        <title>An integrated approach for finding overlooked genes in yeast.</title>
        <authorList>
            <person name="Kumar A."/>
            <person name="Harrison P.M."/>
            <person name="Cheung K.-H."/>
            <person name="Lan N."/>
            <person name="Echols N."/>
            <person name="Bertone P."/>
            <person name="Miller P."/>
            <person name="Gerstein M.B."/>
            <person name="Snyder M."/>
        </authorList>
    </citation>
    <scope>NUCLEOTIDE SEQUENCE [GENOMIC DNA]</scope>
</reference>